<keyword id="KW-0963">Cytoplasm</keyword>
<keyword id="KW-0227">DNA damage</keyword>
<keyword id="KW-0233">DNA recombination</keyword>
<keyword id="KW-0234">DNA repair</keyword>
<keyword id="KW-0255">Endonuclease</keyword>
<keyword id="KW-0378">Hydrolase</keyword>
<keyword id="KW-0460">Magnesium</keyword>
<keyword id="KW-0479">Metal-binding</keyword>
<keyword id="KW-0540">Nuclease</keyword>
<sequence>MNYPNGKPYRKNSAIDGGKKTAAFSNIEYGGRGMSLEKDIEHSNTFYLKSDIAVIHKKPTPVQIVNVNYPKRSKAVINEAYFRTPSTTDYNGVYQGYYIDFEAKETKNKTSFPLNNIHDHQVEHMKNAYQQKGIVFLMIRFKTLDEVYLLPYSKFEVFWKRYKDNIKKSITVDEIRKNGYHIPYQYQPRLDYLKAVDKLILDESEDRV</sequence>
<proteinExistence type="inferred from homology"/>
<accession>A5ISX9</accession>
<protein>
    <recommendedName>
        <fullName evidence="1">Holliday junction resolvase RecU</fullName>
        <ecNumber evidence="1">3.1.21.10</ecNumber>
    </recommendedName>
    <alternativeName>
        <fullName evidence="1">Recombination protein U homolog</fullName>
    </alternativeName>
</protein>
<reference key="1">
    <citation type="submission" date="2007-05" db="EMBL/GenBank/DDBJ databases">
        <title>Complete sequence of chromosome of Staphylococcus aureus subsp. aureus JH9.</title>
        <authorList>
            <consortium name="US DOE Joint Genome Institute"/>
            <person name="Copeland A."/>
            <person name="Lucas S."/>
            <person name="Lapidus A."/>
            <person name="Barry K."/>
            <person name="Detter J.C."/>
            <person name="Glavina del Rio T."/>
            <person name="Hammon N."/>
            <person name="Israni S."/>
            <person name="Pitluck S."/>
            <person name="Chain P."/>
            <person name="Malfatti S."/>
            <person name="Shin M."/>
            <person name="Vergez L."/>
            <person name="Schmutz J."/>
            <person name="Larimer F."/>
            <person name="Land M."/>
            <person name="Hauser L."/>
            <person name="Kyrpides N."/>
            <person name="Kim E."/>
            <person name="Tomasz A."/>
            <person name="Richardson P."/>
        </authorList>
    </citation>
    <scope>NUCLEOTIDE SEQUENCE [LARGE SCALE GENOMIC DNA]</scope>
    <source>
        <strain>JH9</strain>
    </source>
</reference>
<organism>
    <name type="scientific">Staphylococcus aureus (strain JH9)</name>
    <dbReference type="NCBI Taxonomy" id="359786"/>
    <lineage>
        <taxon>Bacteria</taxon>
        <taxon>Bacillati</taxon>
        <taxon>Bacillota</taxon>
        <taxon>Bacilli</taxon>
        <taxon>Bacillales</taxon>
        <taxon>Staphylococcaceae</taxon>
        <taxon>Staphylococcus</taxon>
    </lineage>
</organism>
<gene>
    <name evidence="1" type="primary">recU</name>
    <name type="ordered locus">SaurJH9_1508</name>
</gene>
<name>RECU_STAA9</name>
<evidence type="ECO:0000255" key="1">
    <source>
        <dbReference type="HAMAP-Rule" id="MF_00130"/>
    </source>
</evidence>
<feature type="chain" id="PRO_1000076341" description="Holliday junction resolvase RecU">
    <location>
        <begin position="1"/>
        <end position="208"/>
    </location>
</feature>
<feature type="binding site" evidence="1">
    <location>
        <position position="87"/>
    </location>
    <ligand>
        <name>Mg(2+)</name>
        <dbReference type="ChEBI" id="CHEBI:18420"/>
    </ligand>
</feature>
<feature type="binding site" evidence="1">
    <location>
        <position position="89"/>
    </location>
    <ligand>
        <name>Mg(2+)</name>
        <dbReference type="ChEBI" id="CHEBI:18420"/>
    </ligand>
</feature>
<feature type="binding site" evidence="1">
    <location>
        <position position="102"/>
    </location>
    <ligand>
        <name>Mg(2+)</name>
        <dbReference type="ChEBI" id="CHEBI:18420"/>
    </ligand>
</feature>
<feature type="binding site" evidence="1">
    <location>
        <position position="121"/>
    </location>
    <ligand>
        <name>Mg(2+)</name>
        <dbReference type="ChEBI" id="CHEBI:18420"/>
    </ligand>
</feature>
<feature type="site" description="Transition state stabilizer" evidence="1">
    <location>
        <position position="104"/>
    </location>
</feature>
<dbReference type="EC" id="3.1.21.10" evidence="1"/>
<dbReference type="EMBL" id="CP000703">
    <property type="protein sequence ID" value="ABQ49302.1"/>
    <property type="molecule type" value="Genomic_DNA"/>
</dbReference>
<dbReference type="RefSeq" id="WP_001108889.1">
    <property type="nucleotide sequence ID" value="NC_009487.1"/>
</dbReference>
<dbReference type="SMR" id="A5ISX9"/>
<dbReference type="KEGG" id="saj:SaurJH9_1508"/>
<dbReference type="HOGENOM" id="CLU_096340_0_0_9"/>
<dbReference type="GO" id="GO:0005737">
    <property type="term" value="C:cytoplasm"/>
    <property type="evidence" value="ECO:0007669"/>
    <property type="project" value="UniProtKB-SubCell"/>
</dbReference>
<dbReference type="GO" id="GO:0004519">
    <property type="term" value="F:endonuclease activity"/>
    <property type="evidence" value="ECO:0007669"/>
    <property type="project" value="UniProtKB-UniRule"/>
</dbReference>
<dbReference type="GO" id="GO:0000287">
    <property type="term" value="F:magnesium ion binding"/>
    <property type="evidence" value="ECO:0007669"/>
    <property type="project" value="UniProtKB-UniRule"/>
</dbReference>
<dbReference type="GO" id="GO:0003676">
    <property type="term" value="F:nucleic acid binding"/>
    <property type="evidence" value="ECO:0007669"/>
    <property type="project" value="InterPro"/>
</dbReference>
<dbReference type="GO" id="GO:0007059">
    <property type="term" value="P:chromosome segregation"/>
    <property type="evidence" value="ECO:0007669"/>
    <property type="project" value="UniProtKB-UniRule"/>
</dbReference>
<dbReference type="GO" id="GO:0006310">
    <property type="term" value="P:DNA recombination"/>
    <property type="evidence" value="ECO:0007669"/>
    <property type="project" value="UniProtKB-UniRule"/>
</dbReference>
<dbReference type="GO" id="GO:0006281">
    <property type="term" value="P:DNA repair"/>
    <property type="evidence" value="ECO:0007669"/>
    <property type="project" value="UniProtKB-UniRule"/>
</dbReference>
<dbReference type="CDD" id="cd22354">
    <property type="entry name" value="RecU-like"/>
    <property type="match status" value="1"/>
</dbReference>
<dbReference type="Gene3D" id="3.40.1350.10">
    <property type="match status" value="1"/>
</dbReference>
<dbReference type="HAMAP" id="MF_00130">
    <property type="entry name" value="RecU"/>
    <property type="match status" value="1"/>
</dbReference>
<dbReference type="InterPro" id="IPR004612">
    <property type="entry name" value="Resolv_RecU"/>
</dbReference>
<dbReference type="InterPro" id="IPR011335">
    <property type="entry name" value="Restrct_endonuc-II-like"/>
</dbReference>
<dbReference type="InterPro" id="IPR011856">
    <property type="entry name" value="tRNA_endonuc-like_dom_sf"/>
</dbReference>
<dbReference type="NCBIfam" id="NF002581">
    <property type="entry name" value="PRK02234.1-2"/>
    <property type="match status" value="1"/>
</dbReference>
<dbReference type="NCBIfam" id="NF002583">
    <property type="entry name" value="PRK02234.1-4"/>
    <property type="match status" value="1"/>
</dbReference>
<dbReference type="NCBIfam" id="NF002584">
    <property type="entry name" value="PRK02234.1-5"/>
    <property type="match status" value="1"/>
</dbReference>
<dbReference type="NCBIfam" id="TIGR00648">
    <property type="entry name" value="recU"/>
    <property type="match status" value="1"/>
</dbReference>
<dbReference type="Pfam" id="PF03838">
    <property type="entry name" value="RecU"/>
    <property type="match status" value="1"/>
</dbReference>
<dbReference type="PIRSF" id="PIRSF037785">
    <property type="entry name" value="RecU"/>
    <property type="match status" value="1"/>
</dbReference>
<dbReference type="SUPFAM" id="SSF52980">
    <property type="entry name" value="Restriction endonuclease-like"/>
    <property type="match status" value="1"/>
</dbReference>
<comment type="function">
    <text evidence="1">Endonuclease that resolves Holliday junction intermediates in genetic recombination. Cleaves mobile four-strand junctions by introducing symmetrical nicks in paired strands. Promotes annealing of linear ssDNA with homologous dsDNA. Required for DNA repair, homologous recombination and chromosome segregation.</text>
</comment>
<comment type="catalytic activity">
    <reaction evidence="1">
        <text>Endonucleolytic cleavage at a junction such as a reciprocal single-stranded crossover between two homologous DNA duplexes (Holliday junction).</text>
        <dbReference type="EC" id="3.1.21.10"/>
    </reaction>
</comment>
<comment type="cofactor">
    <cofactor evidence="1">
        <name>Mg(2+)</name>
        <dbReference type="ChEBI" id="CHEBI:18420"/>
    </cofactor>
    <text evidence="1">Binds 1 Mg(2+) ion per subunit.</text>
</comment>
<comment type="subcellular location">
    <subcellularLocation>
        <location evidence="1">Cytoplasm</location>
    </subcellularLocation>
</comment>
<comment type="similarity">
    <text evidence="1">Belongs to the RecU family.</text>
</comment>